<evidence type="ECO:0000250" key="1"/>
<evidence type="ECO:0000255" key="2">
    <source>
        <dbReference type="HAMAP-Rule" id="MF_00100"/>
    </source>
</evidence>
<evidence type="ECO:0000256" key="3">
    <source>
        <dbReference type="SAM" id="MobiDB-lite"/>
    </source>
</evidence>
<sequence>MAIEEMEKKYRISDIARELQVSPQEVLQFVKLEGGKVASTSSMVDQGMRELIFGHFSNEKKMVDETMKIRQEKQRRLSRLEEQSRKTYEKERQLKETLHSASVAPAVHEEKKEPVVPEVRLVVSVPDELVSSEKVEEIEQIEQPVQLEQPVMAAQADQTDQTDQTDQADQADRTDQVIQTDQPVQEEPLEEVPAPKEMPVKEEPSVNEQLVSFETPKNIGGLTVIGTLDMHSPFDRSSEAERKKKNRKKNFKEQADALKSEFDTTVKEEVAADEKGAVKKKPAKPPGETNAATPAGTASTAGAQPLKKGKKKKKPDVNDKVISANIRTTISGMDDSGGTGSRQKFRKLRKIERERESEAAEAFRESQQMIVRVTEYASPHELADLMGVTAKDIIQKCFSLGKFVTINQRLDKESIELIALEFGFEAEFISEVEATAVLIEADEPEDMQIRPPVITIMGHVDHGKTSLLDYIRNSNVVAGESGGITQHIGAYEVTVESDRKITFLDTPGHEAFTAMRARGAQVTDIVILVVAADDSVMPQTIEAINHAKAAGVPIVVAINKVDKPEANPEKIKTQLSEAGVLVEEWGGEYQCQEISAKKGIGIAELMEKVLAEAEIRELKGNFSREINANGIIVESELDKGKGVISTVLVQRGFLKIGDPFVAGNTMGKIRALMDERGKRILFAGPSQPVRVLGFEELPQSGDVLTVMSSDRDARDLAQKRQVIRREHEFRRSTRVKLDSIARQIKEGLMKELSMIIKADTDGSIQALADGLMKIQNEEVKVQIIHQGVGQITETDVLLAAASDAIIIGFRVRPNVNAKKLAEKEDLDVRFYSVIYHVLEDVEKALEGMLSPELHEESLGSLEVRQVFRVPKVGNVGGCYMLEGKVFRDSKVRLLREGVQIYDGQLDALRRFKDDVKEVDAGYECGISLKNYDDIKVGDIVEAYRIVEKKRKL</sequence>
<name>IF2_CHLL2</name>
<keyword id="KW-0963">Cytoplasm</keyword>
<keyword id="KW-0342">GTP-binding</keyword>
<keyword id="KW-0396">Initiation factor</keyword>
<keyword id="KW-0547">Nucleotide-binding</keyword>
<keyword id="KW-0648">Protein biosynthesis</keyword>
<feature type="chain" id="PRO_1000190629" description="Translation initiation factor IF-2">
    <location>
        <begin position="1"/>
        <end position="952"/>
    </location>
</feature>
<feature type="domain" description="tr-type G">
    <location>
        <begin position="449"/>
        <end position="619"/>
    </location>
</feature>
<feature type="region of interest" description="Disordered" evidence="3">
    <location>
        <begin position="74"/>
        <end position="95"/>
    </location>
</feature>
<feature type="region of interest" description="Disordered" evidence="3">
    <location>
        <begin position="153"/>
        <end position="204"/>
    </location>
</feature>
<feature type="region of interest" description="Disordered" evidence="3">
    <location>
        <begin position="230"/>
        <end position="256"/>
    </location>
</feature>
<feature type="region of interest" description="Disordered" evidence="3">
    <location>
        <begin position="273"/>
        <end position="319"/>
    </location>
</feature>
<feature type="region of interest" description="G1" evidence="1">
    <location>
        <begin position="458"/>
        <end position="465"/>
    </location>
</feature>
<feature type="region of interest" description="G2" evidence="1">
    <location>
        <begin position="483"/>
        <end position="487"/>
    </location>
</feature>
<feature type="region of interest" description="G3" evidence="1">
    <location>
        <begin position="505"/>
        <end position="508"/>
    </location>
</feature>
<feature type="region of interest" description="G4" evidence="1">
    <location>
        <begin position="559"/>
        <end position="562"/>
    </location>
</feature>
<feature type="region of interest" description="G5" evidence="1">
    <location>
        <begin position="595"/>
        <end position="597"/>
    </location>
</feature>
<feature type="compositionally biased region" description="Low complexity" evidence="3">
    <location>
        <begin position="153"/>
        <end position="168"/>
    </location>
</feature>
<feature type="compositionally biased region" description="Basic and acidic residues" evidence="3">
    <location>
        <begin position="232"/>
        <end position="242"/>
    </location>
</feature>
<feature type="compositionally biased region" description="Low complexity" evidence="3">
    <location>
        <begin position="286"/>
        <end position="303"/>
    </location>
</feature>
<feature type="binding site" evidence="2">
    <location>
        <begin position="458"/>
        <end position="465"/>
    </location>
    <ligand>
        <name>GTP</name>
        <dbReference type="ChEBI" id="CHEBI:37565"/>
    </ligand>
</feature>
<feature type="binding site" evidence="2">
    <location>
        <begin position="505"/>
        <end position="509"/>
    </location>
    <ligand>
        <name>GTP</name>
        <dbReference type="ChEBI" id="CHEBI:37565"/>
    </ligand>
</feature>
<feature type="binding site" evidence="2">
    <location>
        <begin position="559"/>
        <end position="562"/>
    </location>
    <ligand>
        <name>GTP</name>
        <dbReference type="ChEBI" id="CHEBI:37565"/>
    </ligand>
</feature>
<comment type="function">
    <text evidence="2">One of the essential components for the initiation of protein synthesis. Protects formylmethionyl-tRNA from spontaneous hydrolysis and promotes its binding to the 30S ribosomal subunits. Also involved in the hydrolysis of GTP during the formation of the 70S ribosomal complex.</text>
</comment>
<comment type="subcellular location">
    <subcellularLocation>
        <location evidence="2">Cytoplasm</location>
    </subcellularLocation>
</comment>
<comment type="similarity">
    <text evidence="2">Belongs to the TRAFAC class translation factor GTPase superfamily. Classic translation factor GTPase family. IF-2 subfamily.</text>
</comment>
<reference key="1">
    <citation type="submission" date="2008-05" db="EMBL/GenBank/DDBJ databases">
        <title>Complete sequence of Chlorobium limicola DSM 245.</title>
        <authorList>
            <consortium name="US DOE Joint Genome Institute"/>
            <person name="Lucas S."/>
            <person name="Copeland A."/>
            <person name="Lapidus A."/>
            <person name="Glavina del Rio T."/>
            <person name="Dalin E."/>
            <person name="Tice H."/>
            <person name="Bruce D."/>
            <person name="Goodwin L."/>
            <person name="Pitluck S."/>
            <person name="Schmutz J."/>
            <person name="Larimer F."/>
            <person name="Land M."/>
            <person name="Hauser L."/>
            <person name="Kyrpides N."/>
            <person name="Ovchinnikova G."/>
            <person name="Zhao F."/>
            <person name="Li T."/>
            <person name="Liu Z."/>
            <person name="Overmann J."/>
            <person name="Bryant D.A."/>
            <person name="Richardson P."/>
        </authorList>
    </citation>
    <scope>NUCLEOTIDE SEQUENCE [LARGE SCALE GENOMIC DNA]</scope>
    <source>
        <strain>DSM 245 / NBRC 103803 / 6330</strain>
    </source>
</reference>
<accession>B3EFB1</accession>
<gene>
    <name evidence="2" type="primary">infB</name>
    <name type="ordered locus">Clim_0300</name>
</gene>
<organism>
    <name type="scientific">Chlorobium limicola (strain DSM 245 / NBRC 103803 / 6330)</name>
    <dbReference type="NCBI Taxonomy" id="290315"/>
    <lineage>
        <taxon>Bacteria</taxon>
        <taxon>Pseudomonadati</taxon>
        <taxon>Chlorobiota</taxon>
        <taxon>Chlorobiia</taxon>
        <taxon>Chlorobiales</taxon>
        <taxon>Chlorobiaceae</taxon>
        <taxon>Chlorobium/Pelodictyon group</taxon>
        <taxon>Chlorobium</taxon>
    </lineage>
</organism>
<protein>
    <recommendedName>
        <fullName evidence="2">Translation initiation factor IF-2</fullName>
    </recommendedName>
</protein>
<dbReference type="EMBL" id="CP001097">
    <property type="protein sequence ID" value="ACD89394.1"/>
    <property type="molecule type" value="Genomic_DNA"/>
</dbReference>
<dbReference type="RefSeq" id="WP_012465275.1">
    <property type="nucleotide sequence ID" value="NC_010803.1"/>
</dbReference>
<dbReference type="SMR" id="B3EFB1"/>
<dbReference type="STRING" id="290315.Clim_0300"/>
<dbReference type="KEGG" id="cli:Clim_0300"/>
<dbReference type="eggNOG" id="COG0532">
    <property type="taxonomic scope" value="Bacteria"/>
</dbReference>
<dbReference type="HOGENOM" id="CLU_006301_0_1_10"/>
<dbReference type="OrthoDB" id="9811804at2"/>
<dbReference type="Proteomes" id="UP000008841">
    <property type="component" value="Chromosome"/>
</dbReference>
<dbReference type="GO" id="GO:0005737">
    <property type="term" value="C:cytoplasm"/>
    <property type="evidence" value="ECO:0007669"/>
    <property type="project" value="UniProtKB-SubCell"/>
</dbReference>
<dbReference type="GO" id="GO:0005525">
    <property type="term" value="F:GTP binding"/>
    <property type="evidence" value="ECO:0007669"/>
    <property type="project" value="UniProtKB-KW"/>
</dbReference>
<dbReference type="GO" id="GO:0003924">
    <property type="term" value="F:GTPase activity"/>
    <property type="evidence" value="ECO:0007669"/>
    <property type="project" value="UniProtKB-UniRule"/>
</dbReference>
<dbReference type="GO" id="GO:0003743">
    <property type="term" value="F:translation initiation factor activity"/>
    <property type="evidence" value="ECO:0007669"/>
    <property type="project" value="UniProtKB-UniRule"/>
</dbReference>
<dbReference type="CDD" id="cd01887">
    <property type="entry name" value="IF2_eIF5B"/>
    <property type="match status" value="1"/>
</dbReference>
<dbReference type="CDD" id="cd03702">
    <property type="entry name" value="IF2_mtIF2_II"/>
    <property type="match status" value="1"/>
</dbReference>
<dbReference type="CDD" id="cd03692">
    <property type="entry name" value="mtIF2_IVc"/>
    <property type="match status" value="1"/>
</dbReference>
<dbReference type="FunFam" id="2.40.30.10:FF:000008">
    <property type="entry name" value="Translation initiation factor IF-2"/>
    <property type="match status" value="1"/>
</dbReference>
<dbReference type="FunFam" id="2.40.30.10:FF:000054">
    <property type="entry name" value="Translation initiation factor IF-2"/>
    <property type="match status" value="1"/>
</dbReference>
<dbReference type="FunFam" id="3.40.50.10050:FF:000001">
    <property type="entry name" value="Translation initiation factor IF-2"/>
    <property type="match status" value="1"/>
</dbReference>
<dbReference type="FunFam" id="3.40.50.300:FF:000019">
    <property type="entry name" value="Translation initiation factor IF-2"/>
    <property type="match status" value="1"/>
</dbReference>
<dbReference type="Gene3D" id="1.10.10.2480">
    <property type="match status" value="1"/>
</dbReference>
<dbReference type="Gene3D" id="3.40.50.300">
    <property type="entry name" value="P-loop containing nucleotide triphosphate hydrolases"/>
    <property type="match status" value="1"/>
</dbReference>
<dbReference type="Gene3D" id="2.40.30.10">
    <property type="entry name" value="Translation factors"/>
    <property type="match status" value="2"/>
</dbReference>
<dbReference type="Gene3D" id="3.40.50.10050">
    <property type="entry name" value="Translation initiation factor IF- 2, domain 3"/>
    <property type="match status" value="1"/>
</dbReference>
<dbReference type="HAMAP" id="MF_00100_B">
    <property type="entry name" value="IF_2_B"/>
    <property type="match status" value="1"/>
</dbReference>
<dbReference type="InterPro" id="IPR053905">
    <property type="entry name" value="EF-G-like_DII"/>
</dbReference>
<dbReference type="InterPro" id="IPR044145">
    <property type="entry name" value="IF2_II"/>
</dbReference>
<dbReference type="InterPro" id="IPR006847">
    <property type="entry name" value="IF2_N"/>
</dbReference>
<dbReference type="InterPro" id="IPR027417">
    <property type="entry name" value="P-loop_NTPase"/>
</dbReference>
<dbReference type="InterPro" id="IPR005225">
    <property type="entry name" value="Small_GTP-bd"/>
</dbReference>
<dbReference type="InterPro" id="IPR000795">
    <property type="entry name" value="T_Tr_GTP-bd_dom"/>
</dbReference>
<dbReference type="InterPro" id="IPR000178">
    <property type="entry name" value="TF_IF2_bacterial-like"/>
</dbReference>
<dbReference type="InterPro" id="IPR015760">
    <property type="entry name" value="TIF_IF2"/>
</dbReference>
<dbReference type="InterPro" id="IPR023115">
    <property type="entry name" value="TIF_IF2_dom3"/>
</dbReference>
<dbReference type="InterPro" id="IPR036925">
    <property type="entry name" value="TIF_IF2_dom3_sf"/>
</dbReference>
<dbReference type="InterPro" id="IPR009000">
    <property type="entry name" value="Transl_B-barrel_sf"/>
</dbReference>
<dbReference type="NCBIfam" id="TIGR00487">
    <property type="entry name" value="IF-2"/>
    <property type="match status" value="1"/>
</dbReference>
<dbReference type="NCBIfam" id="TIGR00231">
    <property type="entry name" value="small_GTP"/>
    <property type="match status" value="1"/>
</dbReference>
<dbReference type="PANTHER" id="PTHR43381:SF5">
    <property type="entry name" value="TR-TYPE G DOMAIN-CONTAINING PROTEIN"/>
    <property type="match status" value="1"/>
</dbReference>
<dbReference type="PANTHER" id="PTHR43381">
    <property type="entry name" value="TRANSLATION INITIATION FACTOR IF-2-RELATED"/>
    <property type="match status" value="1"/>
</dbReference>
<dbReference type="Pfam" id="PF22042">
    <property type="entry name" value="EF-G_D2"/>
    <property type="match status" value="1"/>
</dbReference>
<dbReference type="Pfam" id="PF00009">
    <property type="entry name" value="GTP_EFTU"/>
    <property type="match status" value="1"/>
</dbReference>
<dbReference type="Pfam" id="PF11987">
    <property type="entry name" value="IF-2"/>
    <property type="match status" value="1"/>
</dbReference>
<dbReference type="Pfam" id="PF04760">
    <property type="entry name" value="IF2_N"/>
    <property type="match status" value="1"/>
</dbReference>
<dbReference type="SUPFAM" id="SSF52156">
    <property type="entry name" value="Initiation factor IF2/eIF5b, domain 3"/>
    <property type="match status" value="1"/>
</dbReference>
<dbReference type="SUPFAM" id="SSF52540">
    <property type="entry name" value="P-loop containing nucleoside triphosphate hydrolases"/>
    <property type="match status" value="1"/>
</dbReference>
<dbReference type="SUPFAM" id="SSF50447">
    <property type="entry name" value="Translation proteins"/>
    <property type="match status" value="2"/>
</dbReference>
<dbReference type="PROSITE" id="PS51722">
    <property type="entry name" value="G_TR_2"/>
    <property type="match status" value="1"/>
</dbReference>
<dbReference type="PROSITE" id="PS01176">
    <property type="entry name" value="IF2"/>
    <property type="match status" value="1"/>
</dbReference>
<proteinExistence type="inferred from homology"/>